<evidence type="ECO:0000255" key="1">
    <source>
        <dbReference type="PROSITE-ProRule" id="PRU00599"/>
    </source>
</evidence>
<evidence type="ECO:0000305" key="2"/>
<organism>
    <name type="scientific">Asterias amurensis</name>
    <name type="common">Northern Pacific seastar</name>
    <dbReference type="NCBI Taxonomy" id="7602"/>
    <lineage>
        <taxon>Eukaryota</taxon>
        <taxon>Metazoa</taxon>
        <taxon>Echinodermata</taxon>
        <taxon>Eleutherozoa</taxon>
        <taxon>Asterozoa</taxon>
        <taxon>Asteroidea</taxon>
        <taxon>Forcipulatacea</taxon>
        <taxon>Forcipulatida</taxon>
        <taxon>Asteriidae</taxon>
        <taxon>Asterias</taxon>
    </lineage>
</organism>
<dbReference type="PIR" id="A29916">
    <property type="entry name" value="A29916"/>
</dbReference>
<dbReference type="SMR" id="P20690"/>
<dbReference type="GO" id="GO:0003779">
    <property type="term" value="F:actin binding"/>
    <property type="evidence" value="ECO:0007669"/>
    <property type="project" value="UniProtKB-KW"/>
</dbReference>
<dbReference type="Gene3D" id="3.40.20.10">
    <property type="entry name" value="Severin"/>
    <property type="match status" value="1"/>
</dbReference>
<dbReference type="InterPro" id="IPR002108">
    <property type="entry name" value="ADF-H"/>
</dbReference>
<dbReference type="InterPro" id="IPR029006">
    <property type="entry name" value="ADF-H/Gelsolin-like_dom_sf"/>
</dbReference>
<dbReference type="Pfam" id="PF00241">
    <property type="entry name" value="Cofilin_ADF"/>
    <property type="match status" value="1"/>
</dbReference>
<dbReference type="SMART" id="SM00102">
    <property type="entry name" value="ADF"/>
    <property type="match status" value="1"/>
</dbReference>
<dbReference type="SUPFAM" id="SSF55753">
    <property type="entry name" value="Actin depolymerizing proteins"/>
    <property type="match status" value="1"/>
</dbReference>
<dbReference type="PROSITE" id="PS51263">
    <property type="entry name" value="ADF_H"/>
    <property type="match status" value="1"/>
</dbReference>
<keyword id="KW-0009">Actin-binding</keyword>
<keyword id="KW-0903">Direct protein sequencing</keyword>
<keyword id="KW-0677">Repeat</keyword>
<comment type="function">
    <text>Depactin interacts with actin at some of its 12 N-terminal residues and 20 C-terminal residues. Binds to actin monomers from filaments and in solution.</text>
</comment>
<comment type="similarity">
    <text evidence="2">Belongs to the actin-binding proteins ADF family.</text>
</comment>
<feature type="chain" id="PRO_0000214941" description="Depactin">
    <location>
        <begin position="1"/>
        <end position="150"/>
    </location>
</feature>
<feature type="domain" description="ADF-H" evidence="1">
    <location>
        <begin position="3"/>
        <end position="148"/>
    </location>
</feature>
<accession>P20690</accession>
<name>DEPA_ASTAM</name>
<reference key="1">
    <citation type="journal article" date="1988" name="J. Biol. Chem.">
        <title>Amino acid sequence of starfish oocyte depactin.</title>
        <authorList>
            <person name="Takagi T."/>
            <person name="Konishi K."/>
            <person name="Mabuchi I."/>
        </authorList>
    </citation>
    <scope>PROTEIN SEQUENCE</scope>
    <source>
        <tissue>Oocyte</tissue>
    </source>
</reference>
<protein>
    <recommendedName>
        <fullName>Depactin</fullName>
    </recommendedName>
</protein>
<sequence length="150" mass="17234">PQSGTALDENVKEEIRAFKMDQSKVKVPWMLLEIVQNDDRIDVVKVTKKAGPSDNLETLREELKQREVVYFVLDYEPSEEKRAKHNIPKGKTYPLTCFWSMETANIKLKMKYSSTVGTLKSATSTLKTYLEAHDFDDLSEEAIGDKIKNF</sequence>
<proteinExistence type="evidence at protein level"/>